<sequence length="453" mass="49448">MDVFPSTTPDEAVRKSAKRTAELFGSEYLLVTPSVADGSIGLSYRKKAEYSDVKELPPALAEKQAKAAAAGRAKRPKIQPQTKPQADGSGASMSLVKRAAGPAAGGVGGEGQPKSLIQRPSATRQQRPDWHPPWKLMRVISGHLGWVRSLAVEPNNEWFASGAGDRTIKIWNLATGALRLTLTGHISTVRGLAVSPRHPYLFSCGEDKMVKCWDLETNKVIRHYHGHLSGVYTLALHPRLDLLVTGGRDGVARVWDMRTRSNIHVLSGHKGTVADLKCQEADPQIITGSLDATVRLWDLAAGKTMGVLTHHKKGVRNLAIHPREFTFASASTGSIKQWKCPEGDFMQNFEGHNAVINSLAVNEDNVLFSGGDNGSMCFWDWKTGYKFQSIDTMAQPGSLDAEAGIMSATFDRTGLRLITGEADKTIKVWKPDDEATPESHPVTWAPTLGRQRY</sequence>
<evidence type="ECO:0000250" key="1"/>
<evidence type="ECO:0000256" key="2">
    <source>
        <dbReference type="SAM" id="MobiDB-lite"/>
    </source>
</evidence>
<evidence type="ECO:0000305" key="3"/>
<proteinExistence type="inferred from homology"/>
<accession>Q4WT34</accession>
<comment type="function">
    <text evidence="1">Involved in pre-mRNA splicing and required for cell cycle progression at G2/M.</text>
</comment>
<comment type="subunit">
    <text evidence="1">Associated with the spliceosome.</text>
</comment>
<comment type="subcellular location">
    <subcellularLocation>
        <location evidence="1">Cytoplasm</location>
    </subcellularLocation>
    <subcellularLocation>
        <location evidence="1">Nucleus</location>
    </subcellularLocation>
</comment>
<comment type="similarity">
    <text evidence="3">Belongs to the WD repeat PRL1/PRL2 family.</text>
</comment>
<name>PRP46_ASPFU</name>
<keyword id="KW-0963">Cytoplasm</keyword>
<keyword id="KW-0507">mRNA processing</keyword>
<keyword id="KW-0508">mRNA splicing</keyword>
<keyword id="KW-0539">Nucleus</keyword>
<keyword id="KW-1185">Reference proteome</keyword>
<keyword id="KW-0677">Repeat</keyword>
<keyword id="KW-0747">Spliceosome</keyword>
<keyword id="KW-0853">WD repeat</keyword>
<organism>
    <name type="scientific">Aspergillus fumigatus (strain ATCC MYA-4609 / CBS 101355 / FGSC A1100 / Af293)</name>
    <name type="common">Neosartorya fumigata</name>
    <dbReference type="NCBI Taxonomy" id="330879"/>
    <lineage>
        <taxon>Eukaryota</taxon>
        <taxon>Fungi</taxon>
        <taxon>Dikarya</taxon>
        <taxon>Ascomycota</taxon>
        <taxon>Pezizomycotina</taxon>
        <taxon>Eurotiomycetes</taxon>
        <taxon>Eurotiomycetidae</taxon>
        <taxon>Eurotiales</taxon>
        <taxon>Aspergillaceae</taxon>
        <taxon>Aspergillus</taxon>
        <taxon>Aspergillus subgen. Fumigati</taxon>
    </lineage>
</organism>
<gene>
    <name type="primary">prp46</name>
    <name type="ORF">AFUA_1G10710</name>
</gene>
<dbReference type="EMBL" id="AAHF01000004">
    <property type="protein sequence ID" value="EAL90398.1"/>
    <property type="molecule type" value="Genomic_DNA"/>
</dbReference>
<dbReference type="RefSeq" id="XP_752436.1">
    <property type="nucleotide sequence ID" value="XM_747343.1"/>
</dbReference>
<dbReference type="SMR" id="Q4WT34"/>
<dbReference type="FunCoup" id="Q4WT34">
    <property type="interactions" value="958"/>
</dbReference>
<dbReference type="STRING" id="330879.Q4WT34"/>
<dbReference type="EnsemblFungi" id="EAL90398">
    <property type="protein sequence ID" value="EAL90398"/>
    <property type="gene ID" value="AFUA_1G10710"/>
</dbReference>
<dbReference type="GeneID" id="3510553"/>
<dbReference type="KEGG" id="afm:AFUA_1G10710"/>
<dbReference type="VEuPathDB" id="FungiDB:Afu1g10710"/>
<dbReference type="eggNOG" id="KOG0285">
    <property type="taxonomic scope" value="Eukaryota"/>
</dbReference>
<dbReference type="HOGENOM" id="CLU_000288_72_2_1"/>
<dbReference type="InParanoid" id="Q4WT34"/>
<dbReference type="OMA" id="FAMCFDQ"/>
<dbReference type="OrthoDB" id="10256122at2759"/>
<dbReference type="Proteomes" id="UP000002530">
    <property type="component" value="Chromosome 1"/>
</dbReference>
<dbReference type="GO" id="GO:0071013">
    <property type="term" value="C:catalytic step 2 spliceosome"/>
    <property type="evidence" value="ECO:0000318"/>
    <property type="project" value="GO_Central"/>
</dbReference>
<dbReference type="GO" id="GO:0005737">
    <property type="term" value="C:cytoplasm"/>
    <property type="evidence" value="ECO:0007669"/>
    <property type="project" value="UniProtKB-SubCell"/>
</dbReference>
<dbReference type="GO" id="GO:0000974">
    <property type="term" value="C:Prp19 complex"/>
    <property type="evidence" value="ECO:0000318"/>
    <property type="project" value="GO_Central"/>
</dbReference>
<dbReference type="GO" id="GO:0000398">
    <property type="term" value="P:mRNA splicing, via spliceosome"/>
    <property type="evidence" value="ECO:0000318"/>
    <property type="project" value="GO_Central"/>
</dbReference>
<dbReference type="CDD" id="cd00200">
    <property type="entry name" value="WD40"/>
    <property type="match status" value="1"/>
</dbReference>
<dbReference type="FunFam" id="2.130.10.10:FF:000012">
    <property type="entry name" value="Putative pleiotropic regulator 1"/>
    <property type="match status" value="1"/>
</dbReference>
<dbReference type="Gene3D" id="2.130.10.10">
    <property type="entry name" value="YVTN repeat-like/Quinoprotein amine dehydrogenase"/>
    <property type="match status" value="1"/>
</dbReference>
<dbReference type="InterPro" id="IPR020472">
    <property type="entry name" value="G-protein_beta_WD-40_rep"/>
</dbReference>
<dbReference type="InterPro" id="IPR045241">
    <property type="entry name" value="Prp46/PLRG1-like"/>
</dbReference>
<dbReference type="InterPro" id="IPR015943">
    <property type="entry name" value="WD40/YVTN_repeat-like_dom_sf"/>
</dbReference>
<dbReference type="InterPro" id="IPR019775">
    <property type="entry name" value="WD40_repeat_CS"/>
</dbReference>
<dbReference type="InterPro" id="IPR036322">
    <property type="entry name" value="WD40_repeat_dom_sf"/>
</dbReference>
<dbReference type="InterPro" id="IPR001680">
    <property type="entry name" value="WD40_rpt"/>
</dbReference>
<dbReference type="PANTHER" id="PTHR19923:SF0">
    <property type="entry name" value="PLEIOTROPIC REGULATOR 1"/>
    <property type="match status" value="1"/>
</dbReference>
<dbReference type="PANTHER" id="PTHR19923">
    <property type="entry name" value="WD40 REPEAT PROTEINPRL1/PRL2-RELATED"/>
    <property type="match status" value="1"/>
</dbReference>
<dbReference type="Pfam" id="PF00400">
    <property type="entry name" value="WD40"/>
    <property type="match status" value="7"/>
</dbReference>
<dbReference type="PRINTS" id="PR00320">
    <property type="entry name" value="GPROTEINBRPT"/>
</dbReference>
<dbReference type="SMART" id="SM00320">
    <property type="entry name" value="WD40"/>
    <property type="match status" value="7"/>
</dbReference>
<dbReference type="SUPFAM" id="SSF50978">
    <property type="entry name" value="WD40 repeat-like"/>
    <property type="match status" value="1"/>
</dbReference>
<dbReference type="PROSITE" id="PS00678">
    <property type="entry name" value="WD_REPEATS_1"/>
    <property type="match status" value="2"/>
</dbReference>
<dbReference type="PROSITE" id="PS50082">
    <property type="entry name" value="WD_REPEATS_2"/>
    <property type="match status" value="6"/>
</dbReference>
<dbReference type="PROSITE" id="PS50294">
    <property type="entry name" value="WD_REPEATS_REGION"/>
    <property type="match status" value="1"/>
</dbReference>
<protein>
    <recommendedName>
        <fullName>Pre-mRNA-splicing factor prp46</fullName>
    </recommendedName>
    <alternativeName>
        <fullName>Pre-mRNA-processing protein 46</fullName>
    </alternativeName>
</protein>
<reference key="1">
    <citation type="journal article" date="2005" name="Nature">
        <title>Genomic sequence of the pathogenic and allergenic filamentous fungus Aspergillus fumigatus.</title>
        <authorList>
            <person name="Nierman W.C."/>
            <person name="Pain A."/>
            <person name="Anderson M.J."/>
            <person name="Wortman J.R."/>
            <person name="Kim H.S."/>
            <person name="Arroyo J."/>
            <person name="Berriman M."/>
            <person name="Abe K."/>
            <person name="Archer D.B."/>
            <person name="Bermejo C."/>
            <person name="Bennett J.W."/>
            <person name="Bowyer P."/>
            <person name="Chen D."/>
            <person name="Collins M."/>
            <person name="Coulsen R."/>
            <person name="Davies R."/>
            <person name="Dyer P.S."/>
            <person name="Farman M.L."/>
            <person name="Fedorova N."/>
            <person name="Fedorova N.D."/>
            <person name="Feldblyum T.V."/>
            <person name="Fischer R."/>
            <person name="Fosker N."/>
            <person name="Fraser A."/>
            <person name="Garcia J.L."/>
            <person name="Garcia M.J."/>
            <person name="Goble A."/>
            <person name="Goldman G.H."/>
            <person name="Gomi K."/>
            <person name="Griffith-Jones S."/>
            <person name="Gwilliam R."/>
            <person name="Haas B.J."/>
            <person name="Haas H."/>
            <person name="Harris D.E."/>
            <person name="Horiuchi H."/>
            <person name="Huang J."/>
            <person name="Humphray S."/>
            <person name="Jimenez J."/>
            <person name="Keller N."/>
            <person name="Khouri H."/>
            <person name="Kitamoto K."/>
            <person name="Kobayashi T."/>
            <person name="Konzack S."/>
            <person name="Kulkarni R."/>
            <person name="Kumagai T."/>
            <person name="Lafton A."/>
            <person name="Latge J.-P."/>
            <person name="Li W."/>
            <person name="Lord A."/>
            <person name="Lu C."/>
            <person name="Majoros W.H."/>
            <person name="May G.S."/>
            <person name="Miller B.L."/>
            <person name="Mohamoud Y."/>
            <person name="Molina M."/>
            <person name="Monod M."/>
            <person name="Mouyna I."/>
            <person name="Mulligan S."/>
            <person name="Murphy L.D."/>
            <person name="O'Neil S."/>
            <person name="Paulsen I."/>
            <person name="Penalva M.A."/>
            <person name="Pertea M."/>
            <person name="Price C."/>
            <person name="Pritchard B.L."/>
            <person name="Quail M.A."/>
            <person name="Rabbinowitsch E."/>
            <person name="Rawlins N."/>
            <person name="Rajandream M.A."/>
            <person name="Reichard U."/>
            <person name="Renauld H."/>
            <person name="Robson G.D."/>
            <person name="Rodriguez de Cordoba S."/>
            <person name="Rodriguez-Pena J.M."/>
            <person name="Ronning C.M."/>
            <person name="Rutter S."/>
            <person name="Salzberg S.L."/>
            <person name="Sanchez M."/>
            <person name="Sanchez-Ferrero J.C."/>
            <person name="Saunders D."/>
            <person name="Seeger K."/>
            <person name="Squares R."/>
            <person name="Squares S."/>
            <person name="Takeuchi M."/>
            <person name="Tekaia F."/>
            <person name="Turner G."/>
            <person name="Vazquez de Aldana C.R."/>
            <person name="Weidman J."/>
            <person name="White O."/>
            <person name="Woodward J.R."/>
            <person name="Yu J.-H."/>
            <person name="Fraser C.M."/>
            <person name="Galagan J.E."/>
            <person name="Asai K."/>
            <person name="Machida M."/>
            <person name="Hall N."/>
            <person name="Barrell B.G."/>
            <person name="Denning D.W."/>
        </authorList>
    </citation>
    <scope>NUCLEOTIDE SEQUENCE [LARGE SCALE GENOMIC DNA]</scope>
    <source>
        <strain>ATCC MYA-4609 / CBS 101355 / FGSC A1100 / Af293</strain>
    </source>
</reference>
<feature type="chain" id="PRO_0000051160" description="Pre-mRNA-splicing factor prp46">
    <location>
        <begin position="1"/>
        <end position="453"/>
    </location>
</feature>
<feature type="repeat" description="WD 1">
    <location>
        <begin position="142"/>
        <end position="181"/>
    </location>
</feature>
<feature type="repeat" description="WD 2">
    <location>
        <begin position="184"/>
        <end position="223"/>
    </location>
</feature>
<feature type="repeat" description="WD 3">
    <location>
        <begin position="226"/>
        <end position="265"/>
    </location>
</feature>
<feature type="repeat" description="WD 4">
    <location>
        <begin position="268"/>
        <end position="309"/>
    </location>
</feature>
<feature type="repeat" description="WD 5">
    <location>
        <begin position="311"/>
        <end position="350"/>
    </location>
</feature>
<feature type="repeat" description="WD 6">
    <location>
        <begin position="351"/>
        <end position="389"/>
    </location>
</feature>
<feature type="repeat" description="WD 7">
    <location>
        <begin position="400"/>
        <end position="439"/>
    </location>
</feature>
<feature type="region of interest" description="Disordered" evidence="2">
    <location>
        <begin position="62"/>
        <end position="129"/>
    </location>
</feature>
<feature type="region of interest" description="Disordered" evidence="2">
    <location>
        <begin position="432"/>
        <end position="453"/>
    </location>
</feature>
<feature type="compositionally biased region" description="Low complexity" evidence="2">
    <location>
        <begin position="62"/>
        <end position="71"/>
    </location>
</feature>